<accession>P15169</accession>
<accession>B1AP59</accession>
<name>CBPN_HUMAN</name>
<proteinExistence type="evidence at protein level"/>
<organism>
    <name type="scientific">Homo sapiens</name>
    <name type="common">Human</name>
    <dbReference type="NCBI Taxonomy" id="9606"/>
    <lineage>
        <taxon>Eukaryota</taxon>
        <taxon>Metazoa</taxon>
        <taxon>Chordata</taxon>
        <taxon>Craniata</taxon>
        <taxon>Vertebrata</taxon>
        <taxon>Euteleostomi</taxon>
        <taxon>Mammalia</taxon>
        <taxon>Eutheria</taxon>
        <taxon>Euarchontoglires</taxon>
        <taxon>Primates</taxon>
        <taxon>Haplorrhini</taxon>
        <taxon>Catarrhini</taxon>
        <taxon>Hominidae</taxon>
        <taxon>Homo</taxon>
    </lineage>
</organism>
<sequence length="458" mass="52286">MSDLLSVFLHLLLLFKLVAPVTFRHHRYDDLVRTLYKVQNECPGITRVYSIGRSVEGRHLYVLEFSDHPGIHEPLEPEVKYVGNMHGNEALGRELMLQLSEFLCEEFRNRNQRIVQLIQDTRIHILPSMNPDGYEVAAAQGPNKPGYLVGRNNANGVDLNRNFPDLNTYIYYNEKYGGPNHHLPLPDNWKSQVEPETRAVIRWMHSFNFVLSANLHGGAVVANYPYDKSFEHRVRGVRRTASTPTPDDKLFQKLAKVYSYAHGWMFQGWNCGDYFPDGITNGASWYSLSKGMQDFNYLHTNCFEITLELSCDKFPPEEELQREWLGNREALIQFLEQVHQGIKGMVLDENYNNLANAVISVSGINHDVTSGDHGDYFRLLLPGIYTVSATAPGYDPETVTVTVGPAEPTLVNFHLKRSIPQVSPVRRAPSRRHGVRAKVQPQARKKEMEMRQLQRGPA</sequence>
<reference key="1">
    <citation type="journal article" date="1989" name="Eur. J. Biochem.">
        <title>cDNA cloning and complete primary structure of the small, active subunit of human carboxypeptidase N (kininase 1).</title>
        <authorList>
            <person name="Gebhard W."/>
            <person name="Schube M."/>
            <person name="Eulitz M."/>
        </authorList>
    </citation>
    <scope>NUCLEOTIDE SEQUENCE [MRNA]</scope>
</reference>
<reference key="2">
    <citation type="journal article" date="2004" name="Nat. Genet.">
        <title>Complete sequencing and characterization of 21,243 full-length human cDNAs.</title>
        <authorList>
            <person name="Ota T."/>
            <person name="Suzuki Y."/>
            <person name="Nishikawa T."/>
            <person name="Otsuki T."/>
            <person name="Sugiyama T."/>
            <person name="Irie R."/>
            <person name="Wakamatsu A."/>
            <person name="Hayashi K."/>
            <person name="Sato H."/>
            <person name="Nagai K."/>
            <person name="Kimura K."/>
            <person name="Makita H."/>
            <person name="Sekine M."/>
            <person name="Obayashi M."/>
            <person name="Nishi T."/>
            <person name="Shibahara T."/>
            <person name="Tanaka T."/>
            <person name="Ishii S."/>
            <person name="Yamamoto J."/>
            <person name="Saito K."/>
            <person name="Kawai Y."/>
            <person name="Isono Y."/>
            <person name="Nakamura Y."/>
            <person name="Nagahari K."/>
            <person name="Murakami K."/>
            <person name="Yasuda T."/>
            <person name="Iwayanagi T."/>
            <person name="Wagatsuma M."/>
            <person name="Shiratori A."/>
            <person name="Sudo H."/>
            <person name="Hosoiri T."/>
            <person name="Kaku Y."/>
            <person name="Kodaira H."/>
            <person name="Kondo H."/>
            <person name="Sugawara M."/>
            <person name="Takahashi M."/>
            <person name="Kanda K."/>
            <person name="Yokoi T."/>
            <person name="Furuya T."/>
            <person name="Kikkawa E."/>
            <person name="Omura Y."/>
            <person name="Abe K."/>
            <person name="Kamihara K."/>
            <person name="Katsuta N."/>
            <person name="Sato K."/>
            <person name="Tanikawa M."/>
            <person name="Yamazaki M."/>
            <person name="Ninomiya K."/>
            <person name="Ishibashi T."/>
            <person name="Yamashita H."/>
            <person name="Murakawa K."/>
            <person name="Fujimori K."/>
            <person name="Tanai H."/>
            <person name="Kimata M."/>
            <person name="Watanabe M."/>
            <person name="Hiraoka S."/>
            <person name="Chiba Y."/>
            <person name="Ishida S."/>
            <person name="Ono Y."/>
            <person name="Takiguchi S."/>
            <person name="Watanabe S."/>
            <person name="Yosida M."/>
            <person name="Hotuta T."/>
            <person name="Kusano J."/>
            <person name="Kanehori K."/>
            <person name="Takahashi-Fujii A."/>
            <person name="Hara H."/>
            <person name="Tanase T.-O."/>
            <person name="Nomura Y."/>
            <person name="Togiya S."/>
            <person name="Komai F."/>
            <person name="Hara R."/>
            <person name="Takeuchi K."/>
            <person name="Arita M."/>
            <person name="Imose N."/>
            <person name="Musashino K."/>
            <person name="Yuuki H."/>
            <person name="Oshima A."/>
            <person name="Sasaki N."/>
            <person name="Aotsuka S."/>
            <person name="Yoshikawa Y."/>
            <person name="Matsunawa H."/>
            <person name="Ichihara T."/>
            <person name="Shiohata N."/>
            <person name="Sano S."/>
            <person name="Moriya S."/>
            <person name="Momiyama H."/>
            <person name="Satoh N."/>
            <person name="Takami S."/>
            <person name="Terashima Y."/>
            <person name="Suzuki O."/>
            <person name="Nakagawa S."/>
            <person name="Senoh A."/>
            <person name="Mizoguchi H."/>
            <person name="Goto Y."/>
            <person name="Shimizu F."/>
            <person name="Wakebe H."/>
            <person name="Hishigaki H."/>
            <person name="Watanabe T."/>
            <person name="Sugiyama A."/>
            <person name="Takemoto M."/>
            <person name="Kawakami B."/>
            <person name="Yamazaki M."/>
            <person name="Watanabe K."/>
            <person name="Kumagai A."/>
            <person name="Itakura S."/>
            <person name="Fukuzumi Y."/>
            <person name="Fujimori Y."/>
            <person name="Komiyama M."/>
            <person name="Tashiro H."/>
            <person name="Tanigami A."/>
            <person name="Fujiwara T."/>
            <person name="Ono T."/>
            <person name="Yamada K."/>
            <person name="Fujii Y."/>
            <person name="Ozaki K."/>
            <person name="Hirao M."/>
            <person name="Ohmori Y."/>
            <person name="Kawabata A."/>
            <person name="Hikiji T."/>
            <person name="Kobatake N."/>
            <person name="Inagaki H."/>
            <person name="Ikema Y."/>
            <person name="Okamoto S."/>
            <person name="Okitani R."/>
            <person name="Kawakami T."/>
            <person name="Noguchi S."/>
            <person name="Itoh T."/>
            <person name="Shigeta K."/>
            <person name="Senba T."/>
            <person name="Matsumura K."/>
            <person name="Nakajima Y."/>
            <person name="Mizuno T."/>
            <person name="Morinaga M."/>
            <person name="Sasaki M."/>
            <person name="Togashi T."/>
            <person name="Oyama M."/>
            <person name="Hata H."/>
            <person name="Watanabe M."/>
            <person name="Komatsu T."/>
            <person name="Mizushima-Sugano J."/>
            <person name="Satoh T."/>
            <person name="Shirai Y."/>
            <person name="Takahashi Y."/>
            <person name="Nakagawa K."/>
            <person name="Okumura K."/>
            <person name="Nagase T."/>
            <person name="Nomura N."/>
            <person name="Kikuchi H."/>
            <person name="Masuho Y."/>
            <person name="Yamashita R."/>
            <person name="Nakai K."/>
            <person name="Yada T."/>
            <person name="Nakamura Y."/>
            <person name="Ohara O."/>
            <person name="Isogai T."/>
            <person name="Sugano S."/>
        </authorList>
    </citation>
    <scope>NUCLEOTIDE SEQUENCE [LARGE SCALE MRNA]</scope>
    <source>
        <tissue>Liver</tissue>
    </source>
</reference>
<reference key="3">
    <citation type="submission" date="2005-09" db="EMBL/GenBank/DDBJ databases">
        <authorList>
            <person name="Mural R.J."/>
            <person name="Istrail S."/>
            <person name="Sutton G."/>
            <person name="Florea L."/>
            <person name="Halpern A.L."/>
            <person name="Mobarry C.M."/>
            <person name="Lippert R."/>
            <person name="Walenz B."/>
            <person name="Shatkay H."/>
            <person name="Dew I."/>
            <person name="Miller J.R."/>
            <person name="Flanigan M.J."/>
            <person name="Edwards N.J."/>
            <person name="Bolanos R."/>
            <person name="Fasulo D."/>
            <person name="Halldorsson B.V."/>
            <person name="Hannenhalli S."/>
            <person name="Turner R."/>
            <person name="Yooseph S."/>
            <person name="Lu F."/>
            <person name="Nusskern D.R."/>
            <person name="Shue B.C."/>
            <person name="Zheng X.H."/>
            <person name="Zhong F."/>
            <person name="Delcher A.L."/>
            <person name="Huson D.H."/>
            <person name="Kravitz S.A."/>
            <person name="Mouchard L."/>
            <person name="Reinert K."/>
            <person name="Remington K.A."/>
            <person name="Clark A.G."/>
            <person name="Waterman M.S."/>
            <person name="Eichler E.E."/>
            <person name="Adams M.D."/>
            <person name="Hunkapiller M.W."/>
            <person name="Myers E.W."/>
            <person name="Venter J.C."/>
        </authorList>
    </citation>
    <scope>NUCLEOTIDE SEQUENCE [LARGE SCALE GENOMIC DNA]</scope>
</reference>
<reference key="4">
    <citation type="journal article" date="2004" name="Genome Res.">
        <title>The status, quality, and expansion of the NIH full-length cDNA project: the Mammalian Gene Collection (MGC).</title>
        <authorList>
            <consortium name="The MGC Project Team"/>
        </authorList>
    </citation>
    <scope>NUCLEOTIDE SEQUENCE [LARGE SCALE MRNA]</scope>
    <source>
        <tissue>Pancreas</tissue>
    </source>
</reference>
<reference key="5">
    <citation type="journal article" date="1988" name="Biochem. Biophys. Res. Commun.">
        <title>Amino acid sequence of the N-terminus and selected tryptic peptides of the active subunit of human plasma carboxypeptidase N: comparison with other carboxypeptidases.</title>
        <authorList>
            <person name="Skidgel R.A."/>
            <person name="Bennett C.D."/>
            <person name="Schilling J.W."/>
            <person name="Tan F."/>
            <person name="Weerasinghe D.K."/>
            <person name="Erdoes E.G."/>
        </authorList>
    </citation>
    <scope>PROTEIN SEQUENCE OF 21-67; 162-190; 329-343 AND 379-416</scope>
</reference>
<reference key="6">
    <citation type="journal article" date="1993" name="Biol. Chem. Hoppe-Seyler">
        <title>On the specificity of carboxypeptidase N, a comparative study.</title>
        <authorList>
            <person name="Hendriks D."/>
            <person name="Vingron M."/>
            <person name="Vriend G."/>
            <person name="Wang W."/>
            <person name="Nalis N."/>
            <person name="Scharpe S."/>
        </authorList>
    </citation>
    <scope>3D-STRUCTURE MODELING</scope>
</reference>
<reference key="7">
    <citation type="journal article" date="2007" name="J. Mol. Biol.">
        <title>Crystal structure of the human carboxypeptidase N (kininase I) catalytic domain.</title>
        <authorList>
            <person name="Keil C."/>
            <person name="Maskos K."/>
            <person name="Than M."/>
            <person name="Hoopes J.T."/>
            <person name="Huber R."/>
            <person name="Tan F."/>
            <person name="Deddish P.A."/>
            <person name="Erdos E.G."/>
            <person name="Skidgel R.A."/>
            <person name="Bode W."/>
        </authorList>
    </citation>
    <scope>X-RAY CRYSTALLOGRAPHY (2.1 ANGSTROMS) OF 21-458</scope>
    <scope>SUBUNIT</scope>
    <scope>DISULFIDE BONDS</scope>
    <scope>GLYCOSYLATION AT THR-400; THR-402 AND THR-409</scope>
</reference>
<reference key="8">
    <citation type="journal article" date="2003" name="J. Hum. Genet.">
        <title>DNA polymorphism and mutations in CPN1, including the genomic basis of carboxypeptidase N deficiency.</title>
        <authorList>
            <person name="Cao H."/>
            <person name="Hegele R.A."/>
        </authorList>
    </citation>
    <scope>VARIANT CPND ASP-178</scope>
</reference>
<feature type="signal peptide" evidence="6">
    <location>
        <begin position="1"/>
        <end position="20"/>
    </location>
</feature>
<feature type="chain" id="PRO_0000004394" description="Carboxypeptidase N catalytic chain">
    <location>
        <begin position="21"/>
        <end position="458"/>
    </location>
</feature>
<feature type="domain" description="Peptidase M14" evidence="2">
    <location>
        <begin position="24"/>
        <end position="338"/>
    </location>
</feature>
<feature type="region of interest" description="Disordered" evidence="3">
    <location>
        <begin position="423"/>
        <end position="458"/>
    </location>
</feature>
<feature type="active site" description="Proton donor/acceptor" evidence="2">
    <location>
        <position position="308"/>
    </location>
</feature>
<feature type="binding site" evidence="2">
    <location>
        <position position="86"/>
    </location>
    <ligand>
        <name>Zn(2+)</name>
        <dbReference type="ChEBI" id="CHEBI:29105"/>
        <note>catalytic</note>
    </ligand>
</feature>
<feature type="binding site" evidence="2">
    <location>
        <position position="89"/>
    </location>
    <ligand>
        <name>Zn(2+)</name>
        <dbReference type="ChEBI" id="CHEBI:29105"/>
        <note>catalytic</note>
    </ligand>
</feature>
<feature type="binding site" evidence="2">
    <location>
        <position position="216"/>
    </location>
    <ligand>
        <name>Zn(2+)</name>
        <dbReference type="ChEBI" id="CHEBI:29105"/>
        <note>catalytic</note>
    </ligand>
</feature>
<feature type="glycosylation site" description="O-linked (GalNAc...) threonine" evidence="8">
    <location>
        <position position="400"/>
    </location>
</feature>
<feature type="glycosylation site" description="O-linked (GalNAc...) threonine" evidence="8">
    <location>
        <position position="402"/>
    </location>
</feature>
<feature type="glycosylation site" description="O-linked (GalNAc...) threonine" evidence="8">
    <location>
        <position position="409"/>
    </location>
</feature>
<feature type="disulfide bond" evidence="5">
    <location>
        <begin position="42"/>
        <end position="104"/>
    </location>
</feature>
<feature type="disulfide bond" evidence="5">
    <location>
        <begin position="271"/>
        <end position="311"/>
    </location>
</feature>
<feature type="sequence variant" id="VAR_042415" description="In CPND; dbSNP:rs61751507." evidence="4">
    <original>G</original>
    <variation>D</variation>
    <location>
        <position position="178"/>
    </location>
</feature>
<feature type="sequence conflict" description="In Ref. 5; AA sequence." evidence="7" ref="5">
    <original>C</original>
    <variation>R</variation>
    <location>
        <position position="42"/>
    </location>
</feature>
<feature type="sequence conflict" description="In Ref. 5; AA sequence." evidence="7" ref="5">
    <original>T</original>
    <variation>E</variation>
    <location>
        <position position="390"/>
    </location>
</feature>
<feature type="helix" evidence="9">
    <location>
        <begin position="28"/>
        <end position="41"/>
    </location>
</feature>
<feature type="helix" evidence="9">
    <location>
        <begin position="43"/>
        <end position="45"/>
    </location>
</feature>
<feature type="strand" evidence="9">
    <location>
        <begin position="46"/>
        <end position="53"/>
    </location>
</feature>
<feature type="strand" evidence="9">
    <location>
        <begin position="59"/>
        <end position="65"/>
    </location>
</feature>
<feature type="strand" evidence="9">
    <location>
        <begin position="78"/>
        <end position="83"/>
    </location>
</feature>
<feature type="helix" evidence="9">
    <location>
        <begin position="91"/>
        <end position="109"/>
    </location>
</feature>
<feature type="helix" evidence="9">
    <location>
        <begin position="112"/>
        <end position="120"/>
    </location>
</feature>
<feature type="strand" evidence="9">
    <location>
        <begin position="122"/>
        <end position="127"/>
    </location>
</feature>
<feature type="helix" evidence="9">
    <location>
        <begin position="131"/>
        <end position="139"/>
    </location>
</feature>
<feature type="turn" evidence="9">
    <location>
        <begin position="140"/>
        <end position="143"/>
    </location>
</feature>
<feature type="turn" evidence="9">
    <location>
        <begin position="146"/>
        <end position="150"/>
    </location>
</feature>
<feature type="helix" evidence="9">
    <location>
        <begin position="159"/>
        <end position="161"/>
    </location>
</feature>
<feature type="helix" evidence="9">
    <location>
        <begin position="167"/>
        <end position="176"/>
    </location>
</feature>
<feature type="helix" evidence="9">
    <location>
        <begin position="189"/>
        <end position="192"/>
    </location>
</feature>
<feature type="helix" evidence="9">
    <location>
        <begin position="195"/>
        <end position="206"/>
    </location>
</feature>
<feature type="strand" evidence="9">
    <location>
        <begin position="209"/>
        <end position="216"/>
    </location>
</feature>
<feature type="strand" evidence="9">
    <location>
        <begin position="218"/>
        <end position="225"/>
    </location>
</feature>
<feature type="helix" evidence="9">
    <location>
        <begin position="248"/>
        <end position="261"/>
    </location>
</feature>
<feature type="strand" evidence="9">
    <location>
        <begin position="262"/>
        <end position="264"/>
    </location>
</feature>
<feature type="helix" evidence="9">
    <location>
        <begin position="265"/>
        <end position="267"/>
    </location>
</feature>
<feature type="helix" evidence="9">
    <location>
        <begin position="276"/>
        <end position="278"/>
    </location>
</feature>
<feature type="strand" evidence="9">
    <location>
        <begin position="279"/>
        <end position="281"/>
    </location>
</feature>
<feature type="helix" evidence="9">
    <location>
        <begin position="282"/>
        <end position="285"/>
    </location>
</feature>
<feature type="helix" evidence="9">
    <location>
        <begin position="292"/>
        <end position="299"/>
    </location>
</feature>
<feature type="strand" evidence="9">
    <location>
        <begin position="303"/>
        <end position="314"/>
    </location>
</feature>
<feature type="helix" evidence="9">
    <location>
        <begin position="317"/>
        <end position="319"/>
    </location>
</feature>
<feature type="helix" evidence="9">
    <location>
        <begin position="320"/>
        <end position="336"/>
    </location>
</feature>
<feature type="strand" evidence="9">
    <location>
        <begin position="341"/>
        <end position="347"/>
    </location>
</feature>
<feature type="strand" evidence="9">
    <location>
        <begin position="358"/>
        <end position="361"/>
    </location>
</feature>
<feature type="strand" evidence="9">
    <location>
        <begin position="364"/>
        <end position="369"/>
    </location>
</feature>
<feature type="strand" evidence="9">
    <location>
        <begin position="374"/>
        <end position="378"/>
    </location>
</feature>
<feature type="strand" evidence="9">
    <location>
        <begin position="382"/>
        <end position="390"/>
    </location>
</feature>
<feature type="strand" evidence="9">
    <location>
        <begin position="397"/>
        <end position="403"/>
    </location>
</feature>
<feature type="strand" evidence="9">
    <location>
        <begin position="405"/>
        <end position="407"/>
    </location>
</feature>
<evidence type="ECO:0000250" key="1">
    <source>
        <dbReference type="UniProtKB" id="P00730"/>
    </source>
</evidence>
<evidence type="ECO:0000255" key="2">
    <source>
        <dbReference type="PROSITE-ProRule" id="PRU01379"/>
    </source>
</evidence>
<evidence type="ECO:0000256" key="3">
    <source>
        <dbReference type="SAM" id="MobiDB-lite"/>
    </source>
</evidence>
<evidence type="ECO:0000269" key="4">
    <source>
    </source>
</evidence>
<evidence type="ECO:0000269" key="5">
    <source>
    </source>
</evidence>
<evidence type="ECO:0000269" key="6">
    <source>
    </source>
</evidence>
<evidence type="ECO:0000305" key="7"/>
<evidence type="ECO:0000305" key="8">
    <source>
    </source>
</evidence>
<evidence type="ECO:0007829" key="9">
    <source>
        <dbReference type="PDB" id="2NSM"/>
    </source>
</evidence>
<protein>
    <recommendedName>
        <fullName>Carboxypeptidase N catalytic chain</fullName>
        <shortName>CPN</shortName>
        <ecNumber>3.4.17.3</ecNumber>
    </recommendedName>
    <alternativeName>
        <fullName>Anaphylatoxin inactivator</fullName>
    </alternativeName>
    <alternativeName>
        <fullName>Arginine carboxypeptidase</fullName>
    </alternativeName>
    <alternativeName>
        <fullName>Carboxypeptidase N polypeptide 1</fullName>
    </alternativeName>
    <alternativeName>
        <fullName>Carboxypeptidase N small subunit</fullName>
    </alternativeName>
    <alternativeName>
        <fullName>Kininase-1</fullName>
    </alternativeName>
    <alternativeName>
        <fullName>Lysine carboxypeptidase</fullName>
    </alternativeName>
    <alternativeName>
        <fullName>Plasma carboxypeptidase B</fullName>
    </alternativeName>
    <alternativeName>
        <fullName>Serum carboxypeptidase N</fullName>
        <shortName>SCPN</shortName>
    </alternativeName>
</protein>
<dbReference type="EC" id="3.4.17.3"/>
<dbReference type="EMBL" id="X14329">
    <property type="protein sequence ID" value="CAA32507.1"/>
    <property type="molecule type" value="mRNA"/>
</dbReference>
<dbReference type="EMBL" id="AK313972">
    <property type="protein sequence ID" value="BAG36687.1"/>
    <property type="molecule type" value="mRNA"/>
</dbReference>
<dbReference type="EMBL" id="CH471066">
    <property type="protein sequence ID" value="EAW49848.1"/>
    <property type="molecule type" value="Genomic_DNA"/>
</dbReference>
<dbReference type="EMBL" id="BC027897">
    <property type="protein sequence ID" value="AAH27897.1"/>
    <property type="molecule type" value="mRNA"/>
</dbReference>
<dbReference type="CCDS" id="CCDS7486.1"/>
<dbReference type="PIR" id="A30798">
    <property type="entry name" value="A30798"/>
</dbReference>
<dbReference type="PIR" id="S02074">
    <property type="entry name" value="S02074"/>
</dbReference>
<dbReference type="RefSeq" id="NP_001299.1">
    <property type="nucleotide sequence ID" value="NM_001308.3"/>
</dbReference>
<dbReference type="PDB" id="2NSM">
    <property type="method" value="X-ray"/>
    <property type="resolution" value="2.10 A"/>
    <property type="chains" value="A=23-458"/>
</dbReference>
<dbReference type="PDBsum" id="2NSM"/>
<dbReference type="SMR" id="P15169"/>
<dbReference type="BioGRID" id="107761">
    <property type="interactions" value="24"/>
</dbReference>
<dbReference type="CORUM" id="P15169"/>
<dbReference type="FunCoup" id="P15169">
    <property type="interactions" value="98"/>
</dbReference>
<dbReference type="IntAct" id="P15169">
    <property type="interactions" value="16"/>
</dbReference>
<dbReference type="STRING" id="9606.ENSP00000359446"/>
<dbReference type="BindingDB" id="P15169"/>
<dbReference type="ChEMBL" id="CHEMBL4713"/>
<dbReference type="DrugBank" id="DB12271">
    <property type="generic name" value="ORE-1001"/>
</dbReference>
<dbReference type="DrugBank" id="DB01593">
    <property type="generic name" value="Zinc"/>
</dbReference>
<dbReference type="DrugBank" id="DB14487">
    <property type="generic name" value="Zinc acetate"/>
</dbReference>
<dbReference type="DrugBank" id="DB14533">
    <property type="generic name" value="Zinc chloride"/>
</dbReference>
<dbReference type="DrugBank" id="DB14548">
    <property type="generic name" value="Zinc sulfate, unspecified form"/>
</dbReference>
<dbReference type="GuidetoPHARMACOLOGY" id="1597"/>
<dbReference type="MEROPS" id="M14.004"/>
<dbReference type="GlyCosmos" id="P15169">
    <property type="glycosylation" value="3 sites, No reported glycans"/>
</dbReference>
<dbReference type="GlyGen" id="P15169">
    <property type="glycosylation" value="4 sites"/>
</dbReference>
<dbReference type="iPTMnet" id="P15169"/>
<dbReference type="PhosphoSitePlus" id="P15169"/>
<dbReference type="BioMuta" id="CPN1"/>
<dbReference type="DMDM" id="115896"/>
<dbReference type="jPOST" id="P15169"/>
<dbReference type="MassIVE" id="P15169"/>
<dbReference type="PaxDb" id="9606-ENSP00000359446"/>
<dbReference type="PeptideAtlas" id="P15169"/>
<dbReference type="ProteomicsDB" id="53115"/>
<dbReference type="Antibodypedia" id="31135">
    <property type="antibodies" value="239 antibodies from 30 providers"/>
</dbReference>
<dbReference type="DNASU" id="1369"/>
<dbReference type="Ensembl" id="ENST00000370418.8">
    <property type="protein sequence ID" value="ENSP00000359446.3"/>
    <property type="gene ID" value="ENSG00000120054.12"/>
</dbReference>
<dbReference type="GeneID" id="1369"/>
<dbReference type="KEGG" id="hsa:1369"/>
<dbReference type="MANE-Select" id="ENST00000370418.8">
    <property type="protein sequence ID" value="ENSP00000359446.3"/>
    <property type="RefSeq nucleotide sequence ID" value="NM_001308.3"/>
    <property type="RefSeq protein sequence ID" value="NP_001299.1"/>
</dbReference>
<dbReference type="UCSC" id="uc001kql.3">
    <property type="organism name" value="human"/>
</dbReference>
<dbReference type="AGR" id="HGNC:2312"/>
<dbReference type="CTD" id="1369"/>
<dbReference type="DisGeNET" id="1369"/>
<dbReference type="GeneCards" id="CPN1"/>
<dbReference type="HGNC" id="HGNC:2312">
    <property type="gene designation" value="CPN1"/>
</dbReference>
<dbReference type="HPA" id="ENSG00000120054">
    <property type="expression patterns" value="Tissue enriched (liver)"/>
</dbReference>
<dbReference type="MalaCards" id="CPN1"/>
<dbReference type="MIM" id="212070">
    <property type="type" value="phenotype"/>
</dbReference>
<dbReference type="MIM" id="603103">
    <property type="type" value="gene"/>
</dbReference>
<dbReference type="neXtProt" id="NX_P15169"/>
<dbReference type="OpenTargets" id="ENSG00000120054"/>
<dbReference type="PharmGKB" id="PA26829"/>
<dbReference type="VEuPathDB" id="HostDB:ENSG00000120054"/>
<dbReference type="eggNOG" id="KOG2649">
    <property type="taxonomic scope" value="Eukaryota"/>
</dbReference>
<dbReference type="GeneTree" id="ENSGT00940000158235"/>
<dbReference type="HOGENOM" id="CLU_006722_1_3_1"/>
<dbReference type="InParanoid" id="P15169"/>
<dbReference type="OMA" id="CEEYRHG"/>
<dbReference type="OrthoDB" id="10249045at2759"/>
<dbReference type="PAN-GO" id="P15169">
    <property type="GO annotations" value="4 GO annotations based on evolutionary models"/>
</dbReference>
<dbReference type="PhylomeDB" id="P15169"/>
<dbReference type="TreeFam" id="TF315592"/>
<dbReference type="BRENDA" id="3.4.17.3">
    <property type="organism ID" value="2681"/>
</dbReference>
<dbReference type="PathwayCommons" id="P15169"/>
<dbReference type="Reactome" id="R-HSA-977606">
    <property type="pathway name" value="Regulation of Complement cascade"/>
</dbReference>
<dbReference type="SignaLink" id="P15169"/>
<dbReference type="SIGNOR" id="P15169"/>
<dbReference type="BioGRID-ORCS" id="1369">
    <property type="hits" value="8 hits in 1145 CRISPR screens"/>
</dbReference>
<dbReference type="ChiTaRS" id="CPN1">
    <property type="organism name" value="human"/>
</dbReference>
<dbReference type="EvolutionaryTrace" id="P15169"/>
<dbReference type="GeneWiki" id="CPN1"/>
<dbReference type="GenomeRNAi" id="1369"/>
<dbReference type="Pharos" id="P15169">
    <property type="development level" value="Tchem"/>
</dbReference>
<dbReference type="PRO" id="PR:P15169"/>
<dbReference type="Proteomes" id="UP000005640">
    <property type="component" value="Chromosome 10"/>
</dbReference>
<dbReference type="RNAct" id="P15169">
    <property type="molecule type" value="protein"/>
</dbReference>
<dbReference type="Bgee" id="ENSG00000120054">
    <property type="expression patterns" value="Expressed in right lobe of liver and 34 other cell types or tissues"/>
</dbReference>
<dbReference type="ExpressionAtlas" id="P15169">
    <property type="expression patterns" value="baseline and differential"/>
</dbReference>
<dbReference type="GO" id="GO:0005576">
    <property type="term" value="C:extracellular region"/>
    <property type="evidence" value="ECO:0000304"/>
    <property type="project" value="Reactome"/>
</dbReference>
<dbReference type="GO" id="GO:0005615">
    <property type="term" value="C:extracellular space"/>
    <property type="evidence" value="ECO:0000318"/>
    <property type="project" value="GO_Central"/>
</dbReference>
<dbReference type="GO" id="GO:0004181">
    <property type="term" value="F:metallocarboxypeptidase activity"/>
    <property type="evidence" value="ECO:0000318"/>
    <property type="project" value="GO_Central"/>
</dbReference>
<dbReference type="GO" id="GO:0008270">
    <property type="term" value="F:zinc ion binding"/>
    <property type="evidence" value="ECO:0007669"/>
    <property type="project" value="InterPro"/>
</dbReference>
<dbReference type="GO" id="GO:0010815">
    <property type="term" value="P:bradykinin catabolic process"/>
    <property type="evidence" value="ECO:0007669"/>
    <property type="project" value="Ensembl"/>
</dbReference>
<dbReference type="GO" id="GO:0006518">
    <property type="term" value="P:peptide metabolic process"/>
    <property type="evidence" value="ECO:0000318"/>
    <property type="project" value="GO_Central"/>
</dbReference>
<dbReference type="GO" id="GO:0030163">
    <property type="term" value="P:protein catabolic process"/>
    <property type="evidence" value="ECO:0007669"/>
    <property type="project" value="Ensembl"/>
</dbReference>
<dbReference type="GO" id="GO:0016485">
    <property type="term" value="P:protein processing"/>
    <property type="evidence" value="ECO:0000318"/>
    <property type="project" value="GO_Central"/>
</dbReference>
<dbReference type="GO" id="GO:0051384">
    <property type="term" value="P:response to glucocorticoid"/>
    <property type="evidence" value="ECO:0007669"/>
    <property type="project" value="Ensembl"/>
</dbReference>
<dbReference type="CDD" id="cd03864">
    <property type="entry name" value="M14_CPN"/>
    <property type="match status" value="1"/>
</dbReference>
<dbReference type="CDD" id="cd11308">
    <property type="entry name" value="Peptidase_M14NE-CP-C_like"/>
    <property type="match status" value="1"/>
</dbReference>
<dbReference type="FunFam" id="2.60.40.1120:FF:000011">
    <property type="entry name" value="Carboxypeptidase N catalytic chain"/>
    <property type="match status" value="1"/>
</dbReference>
<dbReference type="FunFam" id="3.40.630.10:FF:000013">
    <property type="entry name" value="carboxypeptidase N catalytic chain"/>
    <property type="match status" value="1"/>
</dbReference>
<dbReference type="Gene3D" id="2.60.40.1120">
    <property type="entry name" value="Carboxypeptidase-like, regulatory domain"/>
    <property type="match status" value="1"/>
</dbReference>
<dbReference type="Gene3D" id="3.40.630.10">
    <property type="entry name" value="Zn peptidases"/>
    <property type="match status" value="1"/>
</dbReference>
<dbReference type="InterPro" id="IPR008969">
    <property type="entry name" value="CarboxyPept-like_regulatory"/>
</dbReference>
<dbReference type="InterPro" id="IPR033814">
    <property type="entry name" value="M14_CPN"/>
</dbReference>
<dbReference type="InterPro" id="IPR000834">
    <property type="entry name" value="Peptidase_M14"/>
</dbReference>
<dbReference type="InterPro" id="IPR050753">
    <property type="entry name" value="Peptidase_M14_domain"/>
</dbReference>
<dbReference type="PANTHER" id="PTHR11532:SF80">
    <property type="entry name" value="CARBOXYPEPTIDASE N CATALYTIC CHAIN"/>
    <property type="match status" value="1"/>
</dbReference>
<dbReference type="PANTHER" id="PTHR11532">
    <property type="entry name" value="PROTEASE M14 CARBOXYPEPTIDASE"/>
    <property type="match status" value="1"/>
</dbReference>
<dbReference type="Pfam" id="PF13620">
    <property type="entry name" value="CarboxypepD_reg"/>
    <property type="match status" value="1"/>
</dbReference>
<dbReference type="Pfam" id="PF00246">
    <property type="entry name" value="Peptidase_M14"/>
    <property type="match status" value="1"/>
</dbReference>
<dbReference type="PRINTS" id="PR00765">
    <property type="entry name" value="CRBOXYPTASEA"/>
</dbReference>
<dbReference type="SMART" id="SM00631">
    <property type="entry name" value="Zn_pept"/>
    <property type="match status" value="1"/>
</dbReference>
<dbReference type="SUPFAM" id="SSF49464">
    <property type="entry name" value="Carboxypeptidase regulatory domain-like"/>
    <property type="match status" value="1"/>
</dbReference>
<dbReference type="SUPFAM" id="SSF53187">
    <property type="entry name" value="Zn-dependent exopeptidases"/>
    <property type="match status" value="1"/>
</dbReference>
<dbReference type="PROSITE" id="PS00132">
    <property type="entry name" value="CARBOXYPEPT_ZN_1"/>
    <property type="match status" value="1"/>
</dbReference>
<dbReference type="PROSITE" id="PS00133">
    <property type="entry name" value="CARBOXYPEPT_ZN_2"/>
    <property type="match status" value="1"/>
</dbReference>
<dbReference type="PROSITE" id="PS52035">
    <property type="entry name" value="PEPTIDASE_M14"/>
    <property type="match status" value="1"/>
</dbReference>
<gene>
    <name type="primary">CPN1</name>
    <name type="synonym">ACBP</name>
</gene>
<comment type="function">
    <text>Protects the body from potent vasoactive and inflammatory peptides containing C-terminal Arg or Lys (such as kinins or anaphylatoxins) which are released into the circulation.</text>
</comment>
<comment type="catalytic activity">
    <reaction>
        <text>Release of a C-terminal basic amino acid, preferentially lysine.</text>
        <dbReference type="EC" id="3.4.17.3"/>
    </reaction>
</comment>
<comment type="cofactor">
    <cofactor evidence="1">
        <name>Zn(2+)</name>
        <dbReference type="ChEBI" id="CHEBI:29105"/>
    </cofactor>
    <text evidence="1">Binds 1 zinc ion per subunit.</text>
</comment>
<comment type="subunit">
    <text evidence="5">Tetramer of two catalytic chains and two glycosylated inactive chains.</text>
</comment>
<comment type="interaction">
    <interactant intactId="EBI-2116369">
        <id>P15169</id>
    </interactant>
    <interactant intactId="EBI-8561769">
        <id>Q5SUL5</id>
        <label>HLA-A</label>
    </interactant>
    <organismsDiffer>false</organismsDiffer>
    <experiments>3</experiments>
</comment>
<comment type="interaction">
    <interactant intactId="EBI-2116369">
        <id>P15169</id>
    </interactant>
    <interactant intactId="EBI-399080">
        <id>Q92993</id>
        <label>KAT5</label>
    </interactant>
    <organismsDiffer>false</organismsDiffer>
    <experiments>3</experiments>
</comment>
<comment type="interaction">
    <interactant intactId="EBI-2116369">
        <id>P15169</id>
    </interactant>
    <interactant intactId="EBI-11742507">
        <id>Q8TAP4-4</id>
        <label>LMO3</label>
    </interactant>
    <organismsDiffer>false</organismsDiffer>
    <experiments>3</experiments>
</comment>
<comment type="interaction">
    <interactant intactId="EBI-2116369">
        <id>P15169</id>
    </interactant>
    <interactant intactId="EBI-748974">
        <id>Q96CV9</id>
        <label>OPTN</label>
    </interactant>
    <organismsDiffer>false</organismsDiffer>
    <experiments>3</experiments>
</comment>
<comment type="interaction">
    <interactant intactId="EBI-2116369">
        <id>P15169</id>
    </interactant>
    <interactant intactId="EBI-1383528">
        <id>P17252</id>
        <label>PRKCA</label>
    </interactant>
    <organismsDiffer>false</organismsDiffer>
    <experiments>3</experiments>
</comment>
<comment type="interaction">
    <interactant intactId="EBI-2116369">
        <id>P15169</id>
    </interactant>
    <interactant intactId="EBI-9090795">
        <id>Q15047-2</id>
        <label>SETDB1</label>
    </interactant>
    <organismsDiffer>false</organismsDiffer>
    <experiments>3</experiments>
</comment>
<comment type="interaction">
    <interactant intactId="EBI-2116369">
        <id>P15169</id>
    </interactant>
    <interactant intactId="EBI-359832">
        <id>P61981</id>
        <label>YWHAG</label>
    </interactant>
    <organismsDiffer>false</organismsDiffer>
    <experiments>3</experiments>
</comment>
<comment type="subcellular location">
    <subcellularLocation>
        <location>Secreted</location>
        <location>Extracellular space</location>
    </subcellularLocation>
</comment>
<comment type="tissue specificity">
    <text>Synthesized in the liver and secreted in plasma.</text>
</comment>
<comment type="disease" evidence="4">
    <disease id="DI-01316">
        <name>Carboxypeptidase N deficiency</name>
        <acronym>CPND</acronym>
        <description>An autosomal recessive disorder characterized by angioedema, acute or chronic urticaria, and hay fever or asthma. Affected individuals have levels of carboxypeptidase N below the reference range.</description>
        <dbReference type="MIM" id="212070"/>
    </disease>
    <text>The disease is caused by variants affecting the gene represented in this entry.</text>
</comment>
<comment type="similarity">
    <text evidence="7">Belongs to the peptidase M14 family.</text>
</comment>
<keyword id="KW-0002">3D-structure</keyword>
<keyword id="KW-0121">Carboxypeptidase</keyword>
<keyword id="KW-0903">Direct protein sequencing</keyword>
<keyword id="KW-0225">Disease variant</keyword>
<keyword id="KW-1015">Disulfide bond</keyword>
<keyword id="KW-0325">Glycoprotein</keyword>
<keyword id="KW-0378">Hydrolase</keyword>
<keyword id="KW-0479">Metal-binding</keyword>
<keyword id="KW-0482">Metalloprotease</keyword>
<keyword id="KW-0645">Protease</keyword>
<keyword id="KW-1267">Proteomics identification</keyword>
<keyword id="KW-1185">Reference proteome</keyword>
<keyword id="KW-0964">Secreted</keyword>
<keyword id="KW-0732">Signal</keyword>
<keyword id="KW-0862">Zinc</keyword>